<dbReference type="EMBL" id="CP001072">
    <property type="protein sequence ID" value="ACD48646.1"/>
    <property type="molecule type" value="Genomic_DNA"/>
</dbReference>
<dbReference type="RefSeq" id="WP_001085997.1">
    <property type="nucleotide sequence ID" value="NC_010698.2"/>
</dbReference>
<dbReference type="SMR" id="B2UUW4"/>
<dbReference type="GeneID" id="93237670"/>
<dbReference type="KEGG" id="hps:HPSH_06220"/>
<dbReference type="HOGENOM" id="CLU_074237_2_0_7"/>
<dbReference type="GO" id="GO:0022625">
    <property type="term" value="C:cytosolic large ribosomal subunit"/>
    <property type="evidence" value="ECO:0007669"/>
    <property type="project" value="TreeGrafter"/>
</dbReference>
<dbReference type="GO" id="GO:0070180">
    <property type="term" value="F:large ribosomal subunit rRNA binding"/>
    <property type="evidence" value="ECO:0007669"/>
    <property type="project" value="UniProtKB-UniRule"/>
</dbReference>
<dbReference type="GO" id="GO:0003735">
    <property type="term" value="F:structural constituent of ribosome"/>
    <property type="evidence" value="ECO:0007669"/>
    <property type="project" value="InterPro"/>
</dbReference>
<dbReference type="GO" id="GO:0006412">
    <property type="term" value="P:translation"/>
    <property type="evidence" value="ECO:0007669"/>
    <property type="project" value="UniProtKB-UniRule"/>
</dbReference>
<dbReference type="CDD" id="cd00349">
    <property type="entry name" value="Ribosomal_L11"/>
    <property type="match status" value="1"/>
</dbReference>
<dbReference type="FunFam" id="1.10.10.250:FF:000001">
    <property type="entry name" value="50S ribosomal protein L11"/>
    <property type="match status" value="1"/>
</dbReference>
<dbReference type="FunFam" id="3.30.1550.10:FF:000001">
    <property type="entry name" value="50S ribosomal protein L11"/>
    <property type="match status" value="1"/>
</dbReference>
<dbReference type="Gene3D" id="1.10.10.250">
    <property type="entry name" value="Ribosomal protein L11, C-terminal domain"/>
    <property type="match status" value="1"/>
</dbReference>
<dbReference type="Gene3D" id="3.30.1550.10">
    <property type="entry name" value="Ribosomal protein L11/L12, N-terminal domain"/>
    <property type="match status" value="1"/>
</dbReference>
<dbReference type="HAMAP" id="MF_00736">
    <property type="entry name" value="Ribosomal_uL11"/>
    <property type="match status" value="1"/>
</dbReference>
<dbReference type="InterPro" id="IPR000911">
    <property type="entry name" value="Ribosomal_uL11"/>
</dbReference>
<dbReference type="InterPro" id="IPR006519">
    <property type="entry name" value="Ribosomal_uL11_bac-typ"/>
</dbReference>
<dbReference type="InterPro" id="IPR020783">
    <property type="entry name" value="Ribosomal_uL11_C"/>
</dbReference>
<dbReference type="InterPro" id="IPR036769">
    <property type="entry name" value="Ribosomal_uL11_C_sf"/>
</dbReference>
<dbReference type="InterPro" id="IPR020785">
    <property type="entry name" value="Ribosomal_uL11_CS"/>
</dbReference>
<dbReference type="InterPro" id="IPR020784">
    <property type="entry name" value="Ribosomal_uL11_N"/>
</dbReference>
<dbReference type="InterPro" id="IPR036796">
    <property type="entry name" value="Ribosomal_uL11_N_sf"/>
</dbReference>
<dbReference type="NCBIfam" id="TIGR01632">
    <property type="entry name" value="L11_bact"/>
    <property type="match status" value="1"/>
</dbReference>
<dbReference type="PANTHER" id="PTHR11661">
    <property type="entry name" value="60S RIBOSOMAL PROTEIN L12"/>
    <property type="match status" value="1"/>
</dbReference>
<dbReference type="PANTHER" id="PTHR11661:SF1">
    <property type="entry name" value="LARGE RIBOSOMAL SUBUNIT PROTEIN UL11M"/>
    <property type="match status" value="1"/>
</dbReference>
<dbReference type="Pfam" id="PF00298">
    <property type="entry name" value="Ribosomal_L11"/>
    <property type="match status" value="1"/>
</dbReference>
<dbReference type="Pfam" id="PF03946">
    <property type="entry name" value="Ribosomal_L11_N"/>
    <property type="match status" value="1"/>
</dbReference>
<dbReference type="SMART" id="SM00649">
    <property type="entry name" value="RL11"/>
    <property type="match status" value="1"/>
</dbReference>
<dbReference type="SUPFAM" id="SSF54747">
    <property type="entry name" value="Ribosomal L11/L12e N-terminal domain"/>
    <property type="match status" value="1"/>
</dbReference>
<dbReference type="SUPFAM" id="SSF46906">
    <property type="entry name" value="Ribosomal protein L11, C-terminal domain"/>
    <property type="match status" value="1"/>
</dbReference>
<dbReference type="PROSITE" id="PS00359">
    <property type="entry name" value="RIBOSOMAL_L11"/>
    <property type="match status" value="1"/>
</dbReference>
<keyword id="KW-0488">Methylation</keyword>
<keyword id="KW-0687">Ribonucleoprotein</keyword>
<keyword id="KW-0689">Ribosomal protein</keyword>
<keyword id="KW-0694">RNA-binding</keyword>
<keyword id="KW-0699">rRNA-binding</keyword>
<gene>
    <name evidence="1" type="primary">rplK</name>
    <name type="ordered locus">HPSH_06220</name>
</gene>
<protein>
    <recommendedName>
        <fullName evidence="1">Large ribosomal subunit protein uL11</fullName>
    </recommendedName>
    <alternativeName>
        <fullName evidence="2">50S ribosomal protein L11</fullName>
    </alternativeName>
</protein>
<accession>B2UUW4</accession>
<comment type="function">
    <text evidence="1">Forms part of the ribosomal stalk which helps the ribosome interact with GTP-bound translation factors.</text>
</comment>
<comment type="subunit">
    <text evidence="1">Part of the ribosomal stalk of the 50S ribosomal subunit. Interacts with L10 and the large rRNA to form the base of the stalk. L10 forms an elongated spine to which L12 dimers bind in a sequential fashion forming a multimeric L10(L12)X complex.</text>
</comment>
<comment type="PTM">
    <text evidence="1">One or more lysine residues are methylated.</text>
</comment>
<comment type="similarity">
    <text evidence="1">Belongs to the universal ribosomal protein uL11 family.</text>
</comment>
<sequence>MAKKVVGEIKLQIPAGKANPSPPVGPALGQRGVNIMEFCKAFNERTKDMGSFNIPVIITVYQDKSFTFITKKPPVTDLIKKASGVEKGSDNPLKNKIAKLTHKQVEEIAQLKMEDLNTSTMEAAKKIVMGSARSMGVEVVD</sequence>
<proteinExistence type="inferred from homology"/>
<name>RL11_HELPS</name>
<feature type="chain" id="PRO_1000195650" description="Large ribosomal subunit protein uL11">
    <location>
        <begin position="1"/>
        <end position="141"/>
    </location>
</feature>
<organism>
    <name type="scientific">Helicobacter pylori (strain Shi470)</name>
    <dbReference type="NCBI Taxonomy" id="512562"/>
    <lineage>
        <taxon>Bacteria</taxon>
        <taxon>Pseudomonadati</taxon>
        <taxon>Campylobacterota</taxon>
        <taxon>Epsilonproteobacteria</taxon>
        <taxon>Campylobacterales</taxon>
        <taxon>Helicobacteraceae</taxon>
        <taxon>Helicobacter</taxon>
    </lineage>
</organism>
<reference key="1">
    <citation type="submission" date="2008-05" db="EMBL/GenBank/DDBJ databases">
        <title>Genome sequence of Helicobacter pylori from the remote Amazon: traces of Asian ancestry of the first Americans.</title>
        <authorList>
            <person name="Kersulyte D."/>
            <person name="Kalia A."/>
            <person name="Gilman R.H."/>
            <person name="Berg D.E."/>
        </authorList>
    </citation>
    <scope>NUCLEOTIDE SEQUENCE [LARGE SCALE GENOMIC DNA]</scope>
    <source>
        <strain>Shi470</strain>
    </source>
</reference>
<evidence type="ECO:0000255" key="1">
    <source>
        <dbReference type="HAMAP-Rule" id="MF_00736"/>
    </source>
</evidence>
<evidence type="ECO:0000305" key="2"/>